<keyword id="KW-0004">4Fe-4S</keyword>
<keyword id="KW-0963">Cytoplasm</keyword>
<keyword id="KW-0408">Iron</keyword>
<keyword id="KW-0411">Iron-sulfur</keyword>
<keyword id="KW-0479">Metal-binding</keyword>
<keyword id="KW-0662">Pyridine nucleotide biosynthesis</keyword>
<keyword id="KW-0808">Transferase</keyword>
<reference key="1">
    <citation type="journal article" date="2006" name="BMC Genomics">
        <title>Complete genome sequence of Shigella flexneri 5b and comparison with Shigella flexneri 2a.</title>
        <authorList>
            <person name="Nie H."/>
            <person name="Yang F."/>
            <person name="Zhang X."/>
            <person name="Yang J."/>
            <person name="Chen L."/>
            <person name="Wang J."/>
            <person name="Xiong Z."/>
            <person name="Peng J."/>
            <person name="Sun L."/>
            <person name="Dong J."/>
            <person name="Xue Y."/>
            <person name="Xu X."/>
            <person name="Chen S."/>
            <person name="Yao Z."/>
            <person name="Shen Y."/>
            <person name="Jin Q."/>
        </authorList>
    </citation>
    <scope>NUCLEOTIDE SEQUENCE [LARGE SCALE GENOMIC DNA]</scope>
    <source>
        <strain>8401</strain>
    </source>
</reference>
<accession>Q0T6Y0</accession>
<feature type="chain" id="PRO_1000024975" description="Quinolinate synthase">
    <location>
        <begin position="1"/>
        <end position="347"/>
    </location>
</feature>
<feature type="binding site" evidence="1">
    <location>
        <position position="47"/>
    </location>
    <ligand>
        <name>iminosuccinate</name>
        <dbReference type="ChEBI" id="CHEBI:77875"/>
    </ligand>
</feature>
<feature type="binding site" evidence="1">
    <location>
        <position position="68"/>
    </location>
    <ligand>
        <name>iminosuccinate</name>
        <dbReference type="ChEBI" id="CHEBI:77875"/>
    </ligand>
</feature>
<feature type="binding site" evidence="1">
    <location>
        <position position="113"/>
    </location>
    <ligand>
        <name>[4Fe-4S] cluster</name>
        <dbReference type="ChEBI" id="CHEBI:49883"/>
    </ligand>
</feature>
<feature type="binding site" evidence="1">
    <location>
        <begin position="139"/>
        <end position="141"/>
    </location>
    <ligand>
        <name>iminosuccinate</name>
        <dbReference type="ChEBI" id="CHEBI:77875"/>
    </ligand>
</feature>
<feature type="binding site" evidence="1">
    <location>
        <position position="156"/>
    </location>
    <ligand>
        <name>iminosuccinate</name>
        <dbReference type="ChEBI" id="CHEBI:77875"/>
    </ligand>
</feature>
<feature type="binding site" evidence="1">
    <location>
        <position position="200"/>
    </location>
    <ligand>
        <name>[4Fe-4S] cluster</name>
        <dbReference type="ChEBI" id="CHEBI:49883"/>
    </ligand>
</feature>
<feature type="binding site" evidence="1">
    <location>
        <begin position="226"/>
        <end position="228"/>
    </location>
    <ligand>
        <name>iminosuccinate</name>
        <dbReference type="ChEBI" id="CHEBI:77875"/>
    </ligand>
</feature>
<feature type="binding site" evidence="1">
    <location>
        <position position="243"/>
    </location>
    <ligand>
        <name>iminosuccinate</name>
        <dbReference type="ChEBI" id="CHEBI:77875"/>
    </ligand>
</feature>
<feature type="binding site" evidence="1">
    <location>
        <position position="297"/>
    </location>
    <ligand>
        <name>[4Fe-4S] cluster</name>
        <dbReference type="ChEBI" id="CHEBI:49883"/>
    </ligand>
</feature>
<proteinExistence type="inferred from homology"/>
<comment type="function">
    <text evidence="1">Catalyzes the condensation of iminoaspartate with dihydroxyacetone phosphate to form quinolinate.</text>
</comment>
<comment type="catalytic activity">
    <reaction evidence="1">
        <text>iminosuccinate + dihydroxyacetone phosphate = quinolinate + phosphate + 2 H2O + H(+)</text>
        <dbReference type="Rhea" id="RHEA:25888"/>
        <dbReference type="ChEBI" id="CHEBI:15377"/>
        <dbReference type="ChEBI" id="CHEBI:15378"/>
        <dbReference type="ChEBI" id="CHEBI:29959"/>
        <dbReference type="ChEBI" id="CHEBI:43474"/>
        <dbReference type="ChEBI" id="CHEBI:57642"/>
        <dbReference type="ChEBI" id="CHEBI:77875"/>
        <dbReference type="EC" id="2.5.1.72"/>
    </reaction>
    <physiologicalReaction direction="left-to-right" evidence="1">
        <dbReference type="Rhea" id="RHEA:25889"/>
    </physiologicalReaction>
</comment>
<comment type="cofactor">
    <cofactor evidence="1">
        <name>[4Fe-4S] cluster</name>
        <dbReference type="ChEBI" id="CHEBI:49883"/>
    </cofactor>
    <text evidence="1">Binds 1 [4Fe-4S] cluster per subunit.</text>
</comment>
<comment type="pathway">
    <text evidence="1">Cofactor biosynthesis; NAD(+) biosynthesis; quinolinate from iminoaspartate: step 1/1.</text>
</comment>
<comment type="subcellular location">
    <subcellularLocation>
        <location evidence="1">Cytoplasm</location>
    </subcellularLocation>
</comment>
<comment type="similarity">
    <text evidence="1">Belongs to the quinolinate synthase family. Type 1 subfamily.</text>
</comment>
<sequence>MSVMFDPDTAIYPFPPKPTPLSIDEKAYYREKIKRLLKERNAVMVAHYYTDPEIQQLAEETGGCISDSLEMARFGAKHPASTLLVAGVRFMGETAKILSPEKTILMPTLQVECSLDLGCPVEEFNAFCDAHPDRTVVVYANTSAAVKARADWVVTSSIAVELIDHLDSLGEKIIWAPDKHLGRYVQKQTGGDILCWQGACIVHDEFKTQALTRLQEEYPDAAILVHPESPQAIVDMADAVGSTSQLIAAAKALPHQRLIVATDRGIFYKMQQAVPDKELLEAPTAGEGATCRSCAHCPWMAMNGLQAIAEALEQEGSNHEVHVDERLRERALVPLNRMLDFAATLRG</sequence>
<gene>
    <name evidence="1" type="primary">nadA</name>
    <name type="ordered locus">SFV_0590</name>
</gene>
<organism>
    <name type="scientific">Shigella flexneri serotype 5b (strain 8401)</name>
    <dbReference type="NCBI Taxonomy" id="373384"/>
    <lineage>
        <taxon>Bacteria</taxon>
        <taxon>Pseudomonadati</taxon>
        <taxon>Pseudomonadota</taxon>
        <taxon>Gammaproteobacteria</taxon>
        <taxon>Enterobacterales</taxon>
        <taxon>Enterobacteriaceae</taxon>
        <taxon>Shigella</taxon>
    </lineage>
</organism>
<protein>
    <recommendedName>
        <fullName evidence="1">Quinolinate synthase</fullName>
        <ecNumber evidence="1">2.5.1.72</ecNumber>
    </recommendedName>
</protein>
<name>NADA_SHIF8</name>
<dbReference type="EC" id="2.5.1.72" evidence="1"/>
<dbReference type="EMBL" id="CP000266">
    <property type="protein sequence ID" value="ABF02846.1"/>
    <property type="molecule type" value="Genomic_DNA"/>
</dbReference>
<dbReference type="RefSeq" id="WP_000115305.1">
    <property type="nucleotide sequence ID" value="NC_008258.1"/>
</dbReference>
<dbReference type="SMR" id="Q0T6Y0"/>
<dbReference type="KEGG" id="sfv:SFV_0590"/>
<dbReference type="HOGENOM" id="CLU_047382_1_0_6"/>
<dbReference type="UniPathway" id="UPA00253">
    <property type="reaction ID" value="UER00327"/>
</dbReference>
<dbReference type="Proteomes" id="UP000000659">
    <property type="component" value="Chromosome"/>
</dbReference>
<dbReference type="GO" id="GO:0005829">
    <property type="term" value="C:cytosol"/>
    <property type="evidence" value="ECO:0007669"/>
    <property type="project" value="TreeGrafter"/>
</dbReference>
<dbReference type="GO" id="GO:0051539">
    <property type="term" value="F:4 iron, 4 sulfur cluster binding"/>
    <property type="evidence" value="ECO:0007669"/>
    <property type="project" value="UniProtKB-KW"/>
</dbReference>
<dbReference type="GO" id="GO:0046872">
    <property type="term" value="F:metal ion binding"/>
    <property type="evidence" value="ECO:0007669"/>
    <property type="project" value="UniProtKB-KW"/>
</dbReference>
<dbReference type="GO" id="GO:0008987">
    <property type="term" value="F:quinolinate synthetase A activity"/>
    <property type="evidence" value="ECO:0007669"/>
    <property type="project" value="UniProtKB-UniRule"/>
</dbReference>
<dbReference type="GO" id="GO:0034628">
    <property type="term" value="P:'de novo' NAD biosynthetic process from L-aspartate"/>
    <property type="evidence" value="ECO:0007669"/>
    <property type="project" value="TreeGrafter"/>
</dbReference>
<dbReference type="FunFam" id="3.40.50.10800:FF:000001">
    <property type="entry name" value="Quinolinate synthase A"/>
    <property type="match status" value="1"/>
</dbReference>
<dbReference type="FunFam" id="3.40.50.10800:FF:000003">
    <property type="entry name" value="Quinolinate synthase A"/>
    <property type="match status" value="1"/>
</dbReference>
<dbReference type="Gene3D" id="3.40.50.10800">
    <property type="entry name" value="NadA-like"/>
    <property type="match status" value="3"/>
</dbReference>
<dbReference type="HAMAP" id="MF_00567">
    <property type="entry name" value="NadA_type1"/>
    <property type="match status" value="1"/>
</dbReference>
<dbReference type="InterPro" id="IPR003473">
    <property type="entry name" value="NadA"/>
</dbReference>
<dbReference type="InterPro" id="IPR036094">
    <property type="entry name" value="NadA_sf"/>
</dbReference>
<dbReference type="InterPro" id="IPR023513">
    <property type="entry name" value="Quinolinate_synth_A_type1"/>
</dbReference>
<dbReference type="NCBIfam" id="TIGR00550">
    <property type="entry name" value="nadA"/>
    <property type="match status" value="1"/>
</dbReference>
<dbReference type="NCBIfam" id="NF006877">
    <property type="entry name" value="PRK09375.1-1"/>
    <property type="match status" value="1"/>
</dbReference>
<dbReference type="NCBIfam" id="NF006878">
    <property type="entry name" value="PRK09375.1-2"/>
    <property type="match status" value="1"/>
</dbReference>
<dbReference type="PANTHER" id="PTHR30573:SF0">
    <property type="entry name" value="QUINOLINATE SYNTHASE, CHLOROPLASTIC"/>
    <property type="match status" value="1"/>
</dbReference>
<dbReference type="PANTHER" id="PTHR30573">
    <property type="entry name" value="QUINOLINATE SYNTHETASE A"/>
    <property type="match status" value="1"/>
</dbReference>
<dbReference type="Pfam" id="PF02445">
    <property type="entry name" value="NadA"/>
    <property type="match status" value="1"/>
</dbReference>
<dbReference type="SUPFAM" id="SSF142754">
    <property type="entry name" value="NadA-like"/>
    <property type="match status" value="1"/>
</dbReference>
<evidence type="ECO:0000255" key="1">
    <source>
        <dbReference type="HAMAP-Rule" id="MF_00567"/>
    </source>
</evidence>